<name>PATM3_SOLTU</name>
<sequence length="386" mass="42618">MATTKSFLILFFMILATTSSTCAKLEEMVTVLSIDGGGIKGIIPAIILEFLEGQLQEVDNNKDARLADYFDVIGGTSTGGLLTAMITTPNENNRPFAAAKDIVPFYLEHGPHIFNYSGSIIGPMYDGKYLLQVLQEKLGETRVHQALTEVAISSFDIKTNKPVIFTKSNLAKSPELDAKMYDICYSTAAAPIYFPPHYFITHTSNGDIYEFNLVDGGVATVGDPALLSLSVATRLAQEDPAFSSIKSLDYKQMLLLSLGTGTNSEFDKTYTAQEAAKWGPLRWMLAIQQMTNAASSYMTDYYISTVFQARHSQNNYLRVQENALTGTTTEMDDASEANMELLVQVGETLLKKPVSKDSPETYEEALKRFAKLLSDRKKLRANKASY</sequence>
<proteinExistence type="evidence at transcript level"/>
<reference key="1">
    <citation type="journal article" date="2006" name="Genetics">
        <title>Structural diversity and differential transcription of the patatin multicopy gene family during potato tuber development.</title>
        <authorList>
            <person name="Stupar R.M."/>
            <person name="Beaubien K.A."/>
            <person name="Jin W."/>
            <person name="Song J."/>
            <person name="Lee M.-K."/>
            <person name="Wu C."/>
            <person name="Zhang H.-B."/>
            <person name="Han B."/>
            <person name="Jiang J."/>
        </authorList>
    </citation>
    <scope>NUCLEOTIDE SEQUENCE [MRNA]</scope>
    <scope>DEVELOPMENTAL STAGE</scope>
    <scope>TISSUE SPECIFICITY</scope>
    <source>
        <strain>cv. Kennebec</strain>
    </source>
</reference>
<keyword id="KW-0175">Coiled coil</keyword>
<keyword id="KW-0325">Glycoprotein</keyword>
<keyword id="KW-0378">Hydrolase</keyword>
<keyword id="KW-0442">Lipid degradation</keyword>
<keyword id="KW-0443">Lipid metabolism</keyword>
<keyword id="KW-0611">Plant defense</keyword>
<keyword id="KW-1185">Reference proteome</keyword>
<keyword id="KW-0732">Signal</keyword>
<keyword id="KW-0758">Storage protein</keyword>
<keyword id="KW-0926">Vacuole</keyword>
<comment type="function">
    <text evidence="1">Probable lipolytic acyl hydrolase (LAH), an activity which is thought to be involved in the response of tubers to pathogens.</text>
</comment>
<comment type="subcellular location">
    <subcellularLocation>
        <location evidence="1">Vacuole</location>
    </subcellularLocation>
</comment>
<comment type="tissue specificity">
    <text evidence="4">Tuber.</text>
</comment>
<comment type="developmental stage">
    <text evidence="4">Accumulates progressively during tuber formation from stolon.</text>
</comment>
<comment type="domain">
    <text>The nitrogen atoms of the two glycine residues in the GGXR motif define the oxyanion hole, and stabilize the oxyanion that forms during the nucleophilic attack by the catalytic serine during substrate cleavage.</text>
</comment>
<comment type="miscellaneous">
    <text>Patatin have a dual role as a somatic storage protein and as an enzyme involved in host resistance.</text>
</comment>
<comment type="similarity">
    <text evidence="5">Belongs to the patatin family.</text>
</comment>
<feature type="signal peptide" evidence="2">
    <location>
        <begin position="1"/>
        <end position="23"/>
    </location>
</feature>
<feature type="chain" id="PRO_0000296708" description="Patatin group M-3">
    <location>
        <begin position="24"/>
        <end position="386"/>
    </location>
</feature>
<feature type="domain" description="PNPLA" evidence="3">
    <location>
        <begin position="32"/>
        <end position="229"/>
    </location>
</feature>
<feature type="coiled-coil region" evidence="2">
    <location>
        <begin position="321"/>
        <end position="384"/>
    </location>
</feature>
<feature type="short sequence motif" description="GXGXXG" evidence="3">
    <location>
        <begin position="36"/>
        <end position="41"/>
    </location>
</feature>
<feature type="short sequence motif" description="GXSXG" evidence="3">
    <location>
        <begin position="75"/>
        <end position="79"/>
    </location>
</feature>
<feature type="short sequence motif" description="DGA/G" evidence="3">
    <location>
        <begin position="215"/>
        <end position="217"/>
    </location>
</feature>
<feature type="active site" description="Nucleophile" evidence="3">
    <location>
        <position position="77"/>
    </location>
</feature>
<feature type="active site" description="Proton acceptor" evidence="3">
    <location>
        <position position="215"/>
    </location>
</feature>
<feature type="glycosylation site" description="N-linked (GlcNAc...) asparagine" evidence="2">
    <location>
        <position position="115"/>
    </location>
</feature>
<evidence type="ECO:0000250" key="1"/>
<evidence type="ECO:0000255" key="2"/>
<evidence type="ECO:0000255" key="3">
    <source>
        <dbReference type="PROSITE-ProRule" id="PRU01161"/>
    </source>
</evidence>
<evidence type="ECO:0000269" key="4">
    <source>
    </source>
</evidence>
<evidence type="ECO:0000305" key="5"/>
<protein>
    <recommendedName>
        <fullName>Patatin group M-3</fullName>
        <ecNumber>3.1.1.-</ecNumber>
    </recommendedName>
</protein>
<accession>Q2MY51</accession>
<organism>
    <name type="scientific">Solanum tuberosum</name>
    <name type="common">Potato</name>
    <dbReference type="NCBI Taxonomy" id="4113"/>
    <lineage>
        <taxon>Eukaryota</taxon>
        <taxon>Viridiplantae</taxon>
        <taxon>Streptophyta</taxon>
        <taxon>Embryophyta</taxon>
        <taxon>Tracheophyta</taxon>
        <taxon>Spermatophyta</taxon>
        <taxon>Magnoliopsida</taxon>
        <taxon>eudicotyledons</taxon>
        <taxon>Gunneridae</taxon>
        <taxon>Pentapetalae</taxon>
        <taxon>asterids</taxon>
        <taxon>lamiids</taxon>
        <taxon>Solanales</taxon>
        <taxon>Solanaceae</taxon>
        <taxon>Solanoideae</taxon>
        <taxon>Solaneae</taxon>
        <taxon>Solanum</taxon>
    </lineage>
</organism>
<dbReference type="EC" id="3.1.1.-"/>
<dbReference type="EMBL" id="DQ274487">
    <property type="protein sequence ID" value="ABC55687.1"/>
    <property type="molecule type" value="mRNA"/>
</dbReference>
<dbReference type="SMR" id="Q2MY51"/>
<dbReference type="InParanoid" id="Q2MY51"/>
<dbReference type="Proteomes" id="UP000011115">
    <property type="component" value="Unassembled WGS sequence"/>
</dbReference>
<dbReference type="ExpressionAtlas" id="Q2MY51">
    <property type="expression patterns" value="baseline"/>
</dbReference>
<dbReference type="GO" id="GO:0005773">
    <property type="term" value="C:vacuole"/>
    <property type="evidence" value="ECO:0007669"/>
    <property type="project" value="UniProtKB-SubCell"/>
</dbReference>
<dbReference type="GO" id="GO:0047372">
    <property type="term" value="F:monoacylglycerol lipase activity"/>
    <property type="evidence" value="ECO:0000318"/>
    <property type="project" value="GO_Central"/>
</dbReference>
<dbReference type="GO" id="GO:0045735">
    <property type="term" value="F:nutrient reservoir activity"/>
    <property type="evidence" value="ECO:0007669"/>
    <property type="project" value="UniProtKB-KW"/>
</dbReference>
<dbReference type="GO" id="GO:0004620">
    <property type="term" value="F:phospholipase activity"/>
    <property type="evidence" value="ECO:0000318"/>
    <property type="project" value="GO_Central"/>
</dbReference>
<dbReference type="GO" id="GO:0006952">
    <property type="term" value="P:defense response"/>
    <property type="evidence" value="ECO:0007669"/>
    <property type="project" value="UniProtKB-KW"/>
</dbReference>
<dbReference type="GO" id="GO:0016042">
    <property type="term" value="P:lipid catabolic process"/>
    <property type="evidence" value="ECO:0007669"/>
    <property type="project" value="UniProtKB-KW"/>
</dbReference>
<dbReference type="Gene3D" id="3.40.1090.10">
    <property type="entry name" value="Cytosolic phospholipase A2 catalytic domain"/>
    <property type="match status" value="1"/>
</dbReference>
<dbReference type="InterPro" id="IPR016035">
    <property type="entry name" value="Acyl_Trfase/lysoPLipase"/>
</dbReference>
<dbReference type="InterPro" id="IPR002641">
    <property type="entry name" value="PNPLA_dom"/>
</dbReference>
<dbReference type="PANTHER" id="PTHR32176:SF85">
    <property type="entry name" value="PATATIN GROUP D-2"/>
    <property type="match status" value="1"/>
</dbReference>
<dbReference type="PANTHER" id="PTHR32176">
    <property type="entry name" value="XYLOSE ISOMERASE"/>
    <property type="match status" value="1"/>
</dbReference>
<dbReference type="Pfam" id="PF01734">
    <property type="entry name" value="Patatin"/>
    <property type="match status" value="1"/>
</dbReference>
<dbReference type="SUPFAM" id="SSF52151">
    <property type="entry name" value="FabD/lysophospholipase-like"/>
    <property type="match status" value="1"/>
</dbReference>
<dbReference type="PROSITE" id="PS51635">
    <property type="entry name" value="PNPLA"/>
    <property type="match status" value="1"/>
</dbReference>